<gene>
    <name type="ORF">GK14772</name>
</gene>
<name>NARF_DROWI</name>
<reference key="1">
    <citation type="journal article" date="2007" name="Nature">
        <title>Evolution of genes and genomes on the Drosophila phylogeny.</title>
        <authorList>
            <consortium name="Drosophila 12 genomes consortium"/>
        </authorList>
    </citation>
    <scope>NUCLEOTIDE SEQUENCE [LARGE SCALE GENOMIC DNA]</scope>
    <source>
        <strain>Tucson 14030-0811.24</strain>
    </source>
</reference>
<sequence>MSRFSGALQLTDLDDFITPSQECIKPVTIDKTKSKTGAKITVQEDGYYEESEESGKQKLQKVEITLQDCLACSGCITSAEGVLITQQSQEELLKVLRENQKLKATGDNDLVQTIVFTISMQPILSLAHRYQLSVEETARHLSGYFRNLGADYVLCTKVADDLALIECRQEFVERFRDKEDLTMLSSSCPGWVCYAEKTHGNFILPYIATTRSPQQIMGVLVKHFLAEKFNVPGSRIYHATVMPCYDKKLEASREDFYSEVNGSRDVDCVITSIEVEQMLMEDERSLSQHEPVDLDWPWTDQRPESMIWAHEATMSGGYAEHIFKYAAKELFSEDTDNELKFKQLRNRDFREISLEKDDKTVLKFAIANGFRNIQNLVQKLKRGKGANYHFVEVMACPSGCINGGAQVRPTTGQHVRELTQQLEELYKKLPISQPDNSHTKAIYGDFLDGAHTDKSHDLLHTSYHAVEKLNTALNIKW</sequence>
<feature type="chain" id="PRO_0000383709" description="Probable cytosolic Fe-S cluster assembly factor GK14772">
    <location>
        <begin position="1"/>
        <end position="477"/>
    </location>
</feature>
<feature type="binding site" evidence="2">
    <location>
        <position position="23"/>
    </location>
    <ligand>
        <name>[4Fe-4S] cluster</name>
        <dbReference type="ChEBI" id="CHEBI:49883"/>
        <label>1</label>
    </ligand>
</feature>
<feature type="binding site" evidence="2">
    <location>
        <position position="69"/>
    </location>
    <ligand>
        <name>[4Fe-4S] cluster</name>
        <dbReference type="ChEBI" id="CHEBI:49883"/>
        <label>1</label>
    </ligand>
</feature>
<feature type="binding site" evidence="2">
    <location>
        <position position="72"/>
    </location>
    <ligand>
        <name>[4Fe-4S] cluster</name>
        <dbReference type="ChEBI" id="CHEBI:49883"/>
        <label>1</label>
    </ligand>
</feature>
<feature type="binding site" evidence="2">
    <location>
        <position position="75"/>
    </location>
    <ligand>
        <name>[4Fe-4S] cluster</name>
        <dbReference type="ChEBI" id="CHEBI:49883"/>
        <label>1</label>
    </ligand>
</feature>
<feature type="binding site" evidence="2">
    <location>
        <position position="188"/>
    </location>
    <ligand>
        <name>[4Fe-4S] cluster</name>
        <dbReference type="ChEBI" id="CHEBI:49883"/>
        <label>2</label>
    </ligand>
</feature>
<feature type="binding site" evidence="2">
    <location>
        <position position="244"/>
    </location>
    <ligand>
        <name>[4Fe-4S] cluster</name>
        <dbReference type="ChEBI" id="CHEBI:49883"/>
        <label>2</label>
    </ligand>
</feature>
<feature type="binding site" evidence="2">
    <location>
        <position position="396"/>
    </location>
    <ligand>
        <name>[4Fe-4S] cluster</name>
        <dbReference type="ChEBI" id="CHEBI:49883"/>
        <label>2</label>
    </ligand>
</feature>
<feature type="binding site" evidence="2">
    <location>
        <position position="400"/>
    </location>
    <ligand>
        <name>[4Fe-4S] cluster</name>
        <dbReference type="ChEBI" id="CHEBI:49883"/>
        <label>2</label>
    </ligand>
</feature>
<comment type="function">
    <text evidence="1">Component of the cytosolic iron-sulfur (Fe/S) protein assembly machinery. Required for maturation of extramitochondrial Fe/S proteins (By similarity).</text>
</comment>
<comment type="similarity">
    <text evidence="3">Belongs to the NARF family.</text>
</comment>
<evidence type="ECO:0000250" key="1"/>
<evidence type="ECO:0000255" key="2"/>
<evidence type="ECO:0000305" key="3"/>
<dbReference type="EMBL" id="CH963857">
    <property type="protein sequence ID" value="EDW76223.1"/>
    <property type="molecule type" value="Genomic_DNA"/>
</dbReference>
<dbReference type="SMR" id="B4MUM8"/>
<dbReference type="STRING" id="7260.B4MUM8"/>
<dbReference type="EnsemblMetazoa" id="FBtr0245423">
    <property type="protein sequence ID" value="FBpp0243915"/>
    <property type="gene ID" value="FBgn0216777"/>
</dbReference>
<dbReference type="EnsemblMetazoa" id="XM_002065201.4">
    <property type="protein sequence ID" value="XP_002065237.1"/>
    <property type="gene ID" value="LOC6641817"/>
</dbReference>
<dbReference type="GeneID" id="6641817"/>
<dbReference type="KEGG" id="dwi:6641817"/>
<dbReference type="eggNOG" id="KOG2439">
    <property type="taxonomic scope" value="Eukaryota"/>
</dbReference>
<dbReference type="HOGENOM" id="CLU_018240_0_0_1"/>
<dbReference type="OMA" id="GYLHHVL"/>
<dbReference type="OrthoDB" id="10253113at2759"/>
<dbReference type="PhylomeDB" id="B4MUM8"/>
<dbReference type="Proteomes" id="UP000007798">
    <property type="component" value="Unassembled WGS sequence"/>
</dbReference>
<dbReference type="GO" id="GO:0051539">
    <property type="term" value="F:4 iron, 4 sulfur cluster binding"/>
    <property type="evidence" value="ECO:0007669"/>
    <property type="project" value="UniProtKB-KW"/>
</dbReference>
<dbReference type="GO" id="GO:0046872">
    <property type="term" value="F:metal ion binding"/>
    <property type="evidence" value="ECO:0007669"/>
    <property type="project" value="UniProtKB-KW"/>
</dbReference>
<dbReference type="GO" id="GO:0016226">
    <property type="term" value="P:iron-sulfur cluster assembly"/>
    <property type="evidence" value="ECO:0000250"/>
    <property type="project" value="UniProtKB"/>
</dbReference>
<dbReference type="FunFam" id="3.30.70.20:FF:000042">
    <property type="entry name" value="Cytosolic Fe-S cluster assembly factor NAR1"/>
    <property type="match status" value="1"/>
</dbReference>
<dbReference type="Gene3D" id="3.40.50.1780">
    <property type="match status" value="1"/>
</dbReference>
<dbReference type="Gene3D" id="3.40.950.10">
    <property type="entry name" value="Fe-only Hydrogenase (Larger Subunit), Chain L, domain 3"/>
    <property type="match status" value="1"/>
</dbReference>
<dbReference type="InterPro" id="IPR050340">
    <property type="entry name" value="Cytosolic_Fe-S_CAF"/>
</dbReference>
<dbReference type="InterPro" id="IPR009016">
    <property type="entry name" value="Fe_hydrogenase"/>
</dbReference>
<dbReference type="InterPro" id="IPR004108">
    <property type="entry name" value="Fe_hydrogenase_lsu_C"/>
</dbReference>
<dbReference type="InterPro" id="IPR003149">
    <property type="entry name" value="Fe_hydrogenase_ssu"/>
</dbReference>
<dbReference type="PANTHER" id="PTHR11615">
    <property type="entry name" value="NITRATE, FORMATE, IRON DEHYDROGENASE"/>
    <property type="match status" value="1"/>
</dbReference>
<dbReference type="Pfam" id="PF02906">
    <property type="entry name" value="Fe_hyd_lg_C"/>
    <property type="match status" value="1"/>
</dbReference>
<dbReference type="Pfam" id="PF02256">
    <property type="entry name" value="Fe_hyd_SSU"/>
    <property type="match status" value="1"/>
</dbReference>
<dbReference type="SMART" id="SM00902">
    <property type="entry name" value="Fe_hyd_SSU"/>
    <property type="match status" value="1"/>
</dbReference>
<dbReference type="SUPFAM" id="SSF53920">
    <property type="entry name" value="Fe-only hydrogenase"/>
    <property type="match status" value="1"/>
</dbReference>
<accession>B4MUM8</accession>
<proteinExistence type="inferred from homology"/>
<keyword id="KW-0004">4Fe-4S</keyword>
<keyword id="KW-0408">Iron</keyword>
<keyword id="KW-0411">Iron-sulfur</keyword>
<keyword id="KW-0479">Metal-binding</keyword>
<keyword id="KW-1185">Reference proteome</keyword>
<protein>
    <recommendedName>
        <fullName>Probable cytosolic Fe-S cluster assembly factor GK14772</fullName>
    </recommendedName>
</protein>
<organism>
    <name type="scientific">Drosophila willistoni</name>
    <name type="common">Fruit fly</name>
    <dbReference type="NCBI Taxonomy" id="7260"/>
    <lineage>
        <taxon>Eukaryota</taxon>
        <taxon>Metazoa</taxon>
        <taxon>Ecdysozoa</taxon>
        <taxon>Arthropoda</taxon>
        <taxon>Hexapoda</taxon>
        <taxon>Insecta</taxon>
        <taxon>Pterygota</taxon>
        <taxon>Neoptera</taxon>
        <taxon>Endopterygota</taxon>
        <taxon>Diptera</taxon>
        <taxon>Brachycera</taxon>
        <taxon>Muscomorpha</taxon>
        <taxon>Ephydroidea</taxon>
        <taxon>Drosophilidae</taxon>
        <taxon>Drosophila</taxon>
        <taxon>Sophophora</taxon>
    </lineage>
</organism>